<sequence length="226" mass="24798">MNENLFASFITPMMFGLPLVTLIVLFPSLLFPTSNRLVNNRLISLQQWMLQLVSKQMMSIHNTKGQTWALMLMSLILFIGSTNLLGLLPHSFTPTTQLSMNLGMAIPLWGGAVITGFRNKTKASLAHFLPQGTPTPLIPMLVIIETISLFIQPVALAVRLTANITAGHLLIHLIGGATLALMSINTTTALITFIILILLTVLEFAVAMIQAYVFTLLVSLYLHDNT</sequence>
<dbReference type="EMBL" id="AF010406">
    <property type="protein sequence ID" value="AAD10101.1"/>
    <property type="molecule type" value="Genomic_DNA"/>
</dbReference>
<dbReference type="PIR" id="T11055">
    <property type="entry name" value="T11055"/>
</dbReference>
<dbReference type="RefSeq" id="NP_008411.1">
    <property type="nucleotide sequence ID" value="NC_001941.1"/>
</dbReference>
<dbReference type="PDB" id="6TT7">
    <property type="method" value="EM"/>
    <property type="resolution" value="3.50 A"/>
    <property type="chains" value="N=1-226"/>
</dbReference>
<dbReference type="PDB" id="6ZA9">
    <property type="method" value="EM"/>
    <property type="resolution" value="3.76 A"/>
    <property type="chains" value="N=1-226"/>
</dbReference>
<dbReference type="PDBsum" id="6TT7"/>
<dbReference type="PDBsum" id="6ZA9"/>
<dbReference type="EMDB" id="EMD-10573"/>
<dbReference type="EMDB" id="EMD-11127"/>
<dbReference type="SMR" id="O78752"/>
<dbReference type="STRING" id="9940.ENSOARP00000000006"/>
<dbReference type="PaxDb" id="9940-ENSOARP00000000006"/>
<dbReference type="Ensembl" id="ENSOART00025000023">
    <property type="protein sequence ID" value="ENSOARP00025000007"/>
    <property type="gene ID" value="ENSOARG00025000023"/>
</dbReference>
<dbReference type="Ensembl" id="ENSOART00040000023">
    <property type="protein sequence ID" value="ENSOARP00040000007"/>
    <property type="gene ID" value="ENSOARG00040000023"/>
</dbReference>
<dbReference type="Ensembl" id="ENSOART00180000023">
    <property type="protein sequence ID" value="ENSOARP00180000007"/>
    <property type="gene ID" value="ENSOARG00180000023"/>
</dbReference>
<dbReference type="Ensembl" id="ENSOART00185000023">
    <property type="protein sequence ID" value="ENSOARP00185000007"/>
    <property type="gene ID" value="ENSOARG00185000023"/>
</dbReference>
<dbReference type="Ensembl" id="ENSOART00215000023">
    <property type="protein sequence ID" value="ENSOARP00215000007"/>
    <property type="gene ID" value="ENSOARG00215000023"/>
</dbReference>
<dbReference type="Ensembl" id="ENSOART00220000023">
    <property type="protein sequence ID" value="ENSOARP00220000007"/>
    <property type="gene ID" value="ENSOARG00220000023"/>
</dbReference>
<dbReference type="Ensembl" id="ENSOART00225000023">
    <property type="protein sequence ID" value="ENSOARP00225000007"/>
    <property type="gene ID" value="ENSOARG00225000023"/>
</dbReference>
<dbReference type="Ensembl" id="ENSOART00260000023">
    <property type="protein sequence ID" value="ENSOARP00260000007"/>
    <property type="gene ID" value="ENSOARG00260000023"/>
</dbReference>
<dbReference type="GeneID" id="808254"/>
<dbReference type="KEGG" id="oas:808254"/>
<dbReference type="CTD" id="4508"/>
<dbReference type="eggNOG" id="KOG4665">
    <property type="taxonomic scope" value="Eukaryota"/>
</dbReference>
<dbReference type="HOGENOM" id="CLU_041018_0_2_1"/>
<dbReference type="OMA" id="QSAYLFF"/>
<dbReference type="OrthoDB" id="5976622at2759"/>
<dbReference type="Proteomes" id="UP000002356">
    <property type="component" value="Mitochondrion"/>
</dbReference>
<dbReference type="Bgee" id="ENSOARG00000000022">
    <property type="expression patterns" value="Expressed in adrenal cortex and 55 other cell types or tissues"/>
</dbReference>
<dbReference type="ExpressionAtlas" id="O78752">
    <property type="expression patterns" value="baseline"/>
</dbReference>
<dbReference type="GO" id="GO:0005743">
    <property type="term" value="C:mitochondrial inner membrane"/>
    <property type="evidence" value="ECO:0007669"/>
    <property type="project" value="UniProtKB-SubCell"/>
</dbReference>
<dbReference type="GO" id="GO:0045259">
    <property type="term" value="C:proton-transporting ATP synthase complex"/>
    <property type="evidence" value="ECO:0000250"/>
    <property type="project" value="UniProtKB"/>
</dbReference>
<dbReference type="GO" id="GO:0015252">
    <property type="term" value="F:proton channel activity"/>
    <property type="evidence" value="ECO:0000250"/>
    <property type="project" value="UniProtKB"/>
</dbReference>
<dbReference type="GO" id="GO:0046933">
    <property type="term" value="F:proton-transporting ATP synthase activity, rotational mechanism"/>
    <property type="evidence" value="ECO:0007669"/>
    <property type="project" value="Ensembl"/>
</dbReference>
<dbReference type="GO" id="GO:0015986">
    <property type="term" value="P:proton motive force-driven ATP synthesis"/>
    <property type="evidence" value="ECO:0000250"/>
    <property type="project" value="UniProtKB"/>
</dbReference>
<dbReference type="GO" id="GO:0042776">
    <property type="term" value="P:proton motive force-driven mitochondrial ATP synthesis"/>
    <property type="evidence" value="ECO:0007669"/>
    <property type="project" value="Ensembl"/>
</dbReference>
<dbReference type="GO" id="GO:1902600">
    <property type="term" value="P:proton transmembrane transport"/>
    <property type="evidence" value="ECO:0000250"/>
    <property type="project" value="UniProtKB"/>
</dbReference>
<dbReference type="CDD" id="cd00310">
    <property type="entry name" value="ATP-synt_Fo_a_6"/>
    <property type="match status" value="1"/>
</dbReference>
<dbReference type="FunFam" id="1.20.120.220:FF:000004">
    <property type="entry name" value="ATP synthase subunit a"/>
    <property type="match status" value="1"/>
</dbReference>
<dbReference type="Gene3D" id="1.20.120.220">
    <property type="entry name" value="ATP synthase, F0 complex, subunit A"/>
    <property type="match status" value="1"/>
</dbReference>
<dbReference type="InterPro" id="IPR000568">
    <property type="entry name" value="ATP_synth_F0_asu"/>
</dbReference>
<dbReference type="InterPro" id="IPR023011">
    <property type="entry name" value="ATP_synth_F0_asu_AS"/>
</dbReference>
<dbReference type="InterPro" id="IPR045083">
    <property type="entry name" value="ATP_synth_F0_asu_bact/mt"/>
</dbReference>
<dbReference type="InterPro" id="IPR035908">
    <property type="entry name" value="F0_ATP_A_sf"/>
</dbReference>
<dbReference type="NCBIfam" id="TIGR01131">
    <property type="entry name" value="ATP_synt_6_or_A"/>
    <property type="match status" value="1"/>
</dbReference>
<dbReference type="PANTHER" id="PTHR11410">
    <property type="entry name" value="ATP SYNTHASE SUBUNIT A"/>
    <property type="match status" value="1"/>
</dbReference>
<dbReference type="PANTHER" id="PTHR11410:SF0">
    <property type="entry name" value="ATP SYNTHASE SUBUNIT A"/>
    <property type="match status" value="1"/>
</dbReference>
<dbReference type="Pfam" id="PF00119">
    <property type="entry name" value="ATP-synt_A"/>
    <property type="match status" value="1"/>
</dbReference>
<dbReference type="PRINTS" id="PR00123">
    <property type="entry name" value="ATPASEA"/>
</dbReference>
<dbReference type="SUPFAM" id="SSF81336">
    <property type="entry name" value="F1F0 ATP synthase subunit A"/>
    <property type="match status" value="1"/>
</dbReference>
<dbReference type="PROSITE" id="PS00449">
    <property type="entry name" value="ATPASE_A"/>
    <property type="match status" value="1"/>
</dbReference>
<comment type="function">
    <text evidence="1">Subunit a, of the mitochondrial membrane ATP synthase complex (F(1)F(0) ATP synthase or Complex V) that produces ATP from ADP in the presence of a proton gradient across the membrane which is generated by electron transport complexes of the respiratory chain. ATP synthase complex consist of a soluble F(1) head domain - the catalytic core - and a membrane F(1) domain - the membrane proton channel. These two domains are linked by a central stalk rotating inside the F(1) region and a stationary peripheral stalk. During catalysis, ATP synthesis in the catalytic domain of F(1) is coupled via a rotary mechanism of the central stalk subunits to proton translocation. With the subunit c (ATP5MC1), forms the proton-conducting channel in the F(0) domain, that contains two crucial half-channels (inlet and outlet) that facilitate proton movement from the mitochondrial intermembrane space (IMS) into the matrix. Protons are taken up via the inlet half-channel and released through the outlet half-channel, following a Grotthuss mechanism.</text>
</comment>
<comment type="catalytic activity">
    <reaction evidence="1">
        <text>H(+)(in) = H(+)(out)</text>
        <dbReference type="Rhea" id="RHEA:34979"/>
        <dbReference type="ChEBI" id="CHEBI:15378"/>
    </reaction>
</comment>
<comment type="subunit">
    <text evidence="1">Component of the ATP synthase complex composed at least of ATP5F1A/subunit alpha, ATP5F1B/subunit beta, ATP5MC1/subunit c (homooctomer), MT-ATP6/subunit a, MT-ATP8/subunit 8, ATP5ME/subunit e, ATP5MF/subunit f, ATP5MG/subunit g, ATP5MK/subunit k, ATP5MJ/subunit j, ATP5F1C/subunit gamma, ATP5F1D/subunit delta, ATP5F1E/subunit epsilon, ATP5PF/subunit F6, ATP5PB/subunit b, ATP5PD/subunit d, ATP5PO/subunit OSCP. ATP synthase complex consists of a soluble F(1) head domain (subunits alpha(3) and beta(3)) - the catalytic core - and a membrane F(0) domain - the membrane proton channel (subunits c, a, 8, e, f, g, k and j). These two domains are linked by a central stalk (subunits gamma, delta, and epsilon) rotating inside the F1 region and a stationary peripheral stalk (subunits F6, b, d, and OSCP). Interacts with DNAJC30; interaction is direct.</text>
</comment>
<comment type="subcellular location">
    <subcellularLocation>
        <location>Mitochondrion inner membrane</location>
        <topology>Multi-pass membrane protein</topology>
    </subcellularLocation>
</comment>
<comment type="similarity">
    <text evidence="3">Belongs to the ATPase A chain family.</text>
</comment>
<evidence type="ECO:0000250" key="1">
    <source>
        <dbReference type="UniProtKB" id="P00846"/>
    </source>
</evidence>
<evidence type="ECO:0000255" key="2"/>
<evidence type="ECO:0000305" key="3"/>
<evidence type="ECO:0000312" key="4">
    <source>
        <dbReference type="Proteomes" id="UP000002356"/>
    </source>
</evidence>
<evidence type="ECO:0007744" key="5">
    <source>
        <dbReference type="PDB" id="6TT7"/>
    </source>
</evidence>
<evidence type="ECO:0007744" key="6">
    <source>
        <dbReference type="PDB" id="6ZA9"/>
    </source>
</evidence>
<evidence type="ECO:0007829" key="7">
    <source>
        <dbReference type="PDB" id="6TT7"/>
    </source>
</evidence>
<gene>
    <name evidence="1" type="primary">MT-ATP6</name>
    <name type="synonym">ATP6</name>
    <name type="synonym">ATPASE6</name>
    <name type="synonym">MTATP6</name>
</gene>
<geneLocation type="mitochondrion"/>
<proteinExistence type="evidence at protein level"/>
<reference key="1">
    <citation type="journal article" date="1998" name="J. Mol. Evol.">
        <title>The complete mitochondrial DNA sequence of the domestic sheep (Ovis aries) and comparison with the other major ovine haplotype.</title>
        <authorList>
            <person name="Hiendleder S."/>
            <person name="Lewalski H."/>
            <person name="Wassmuth R."/>
            <person name="Janke A."/>
        </authorList>
    </citation>
    <scope>NUCLEOTIDE SEQUENCE [LARGE SCALE GENOMIC DNA]</scope>
    <source>
        <strain evidence="4">Merinolandschaf</strain>
        <tissue>Liver</tissue>
    </source>
</reference>
<reference evidence="5 6" key="2">
    <citation type="journal article" date="2020" name="Nat. Struct. Mol. Biol.">
        <title>Cryo-EM structure of the entire mammalian F-type ATP synthase.</title>
        <authorList>
            <person name="Pinke G."/>
            <person name="Zhou L."/>
            <person name="Sazanov L.A."/>
        </authorList>
    </citation>
    <scope>STRUCTURE BY ELECTRON MICROSCOPY (3.50 ANGSTROMS)</scope>
</reference>
<accession>O78752</accession>
<name>ATP6_SHEEP</name>
<protein>
    <recommendedName>
        <fullName evidence="1">ATP synthase F(0) complex subunit a</fullName>
    </recommendedName>
    <alternativeName>
        <fullName>F-ATPase protein 6</fullName>
    </alternativeName>
    <alternativeName>
        <fullName evidence="1">Proton-conducting channel, ATP synthase F(0) complex subunit a</fullName>
    </alternativeName>
</protein>
<keyword id="KW-0002">3D-structure</keyword>
<keyword id="KW-0066">ATP synthesis</keyword>
<keyword id="KW-0138">CF(0)</keyword>
<keyword id="KW-0375">Hydrogen ion transport</keyword>
<keyword id="KW-0406">Ion transport</keyword>
<keyword id="KW-0472">Membrane</keyword>
<keyword id="KW-0496">Mitochondrion</keyword>
<keyword id="KW-0999">Mitochondrion inner membrane</keyword>
<keyword id="KW-1185">Reference proteome</keyword>
<keyword id="KW-0812">Transmembrane</keyword>
<keyword id="KW-1133">Transmembrane helix</keyword>
<keyword id="KW-0813">Transport</keyword>
<organism>
    <name type="scientific">Ovis aries</name>
    <name type="common">Sheep</name>
    <dbReference type="NCBI Taxonomy" id="9940"/>
    <lineage>
        <taxon>Eukaryota</taxon>
        <taxon>Metazoa</taxon>
        <taxon>Chordata</taxon>
        <taxon>Craniata</taxon>
        <taxon>Vertebrata</taxon>
        <taxon>Euteleostomi</taxon>
        <taxon>Mammalia</taxon>
        <taxon>Eutheria</taxon>
        <taxon>Laurasiatheria</taxon>
        <taxon>Artiodactyla</taxon>
        <taxon>Ruminantia</taxon>
        <taxon>Pecora</taxon>
        <taxon>Bovidae</taxon>
        <taxon>Caprinae</taxon>
        <taxon>Ovis</taxon>
    </lineage>
</organism>
<feature type="chain" id="PRO_0000082170" description="ATP synthase F(0) complex subunit a">
    <location>
        <begin position="1"/>
        <end position="226"/>
    </location>
</feature>
<feature type="transmembrane region" description="Helical" evidence="2">
    <location>
        <begin position="6"/>
        <end position="26"/>
    </location>
</feature>
<feature type="transmembrane region" description="Helical" evidence="2">
    <location>
        <begin position="68"/>
        <end position="88"/>
    </location>
</feature>
<feature type="transmembrane region" description="Helical" evidence="2">
    <location>
        <begin position="97"/>
        <end position="117"/>
    </location>
</feature>
<feature type="transmembrane region" description="Helical" evidence="2">
    <location>
        <begin position="138"/>
        <end position="158"/>
    </location>
</feature>
<feature type="transmembrane region" description="Helical" evidence="2">
    <location>
        <begin position="164"/>
        <end position="184"/>
    </location>
</feature>
<feature type="transmembrane region" description="Helical" evidence="2">
    <location>
        <begin position="189"/>
        <end position="209"/>
    </location>
</feature>
<feature type="turn" evidence="7">
    <location>
        <begin position="3"/>
        <end position="6"/>
    </location>
</feature>
<feature type="strand" evidence="7">
    <location>
        <begin position="7"/>
        <end position="10"/>
    </location>
</feature>
<feature type="strand" evidence="7">
    <location>
        <begin position="15"/>
        <end position="17"/>
    </location>
</feature>
<feature type="helix" evidence="7">
    <location>
        <begin position="19"/>
        <end position="25"/>
    </location>
</feature>
<feature type="helix" evidence="7">
    <location>
        <begin position="26"/>
        <end position="30"/>
    </location>
</feature>
<feature type="strand" evidence="7">
    <location>
        <begin position="36"/>
        <end position="38"/>
    </location>
</feature>
<feature type="helix" evidence="7">
    <location>
        <begin position="41"/>
        <end position="57"/>
    </location>
</feature>
<feature type="helix" evidence="7">
    <location>
        <begin position="63"/>
        <end position="66"/>
    </location>
</feature>
<feature type="helix" evidence="7">
    <location>
        <begin position="69"/>
        <end position="86"/>
    </location>
</feature>
<feature type="strand" evidence="7">
    <location>
        <begin position="88"/>
        <end position="90"/>
    </location>
</feature>
<feature type="helix" evidence="7">
    <location>
        <begin position="94"/>
        <end position="96"/>
    </location>
</feature>
<feature type="helix" evidence="7">
    <location>
        <begin position="98"/>
        <end position="118"/>
    </location>
</feature>
<feature type="helix" evidence="7">
    <location>
        <begin position="121"/>
        <end position="124"/>
    </location>
</feature>
<feature type="turn" evidence="7">
    <location>
        <begin position="125"/>
        <end position="128"/>
    </location>
</feature>
<feature type="helix" evidence="7">
    <location>
        <begin position="135"/>
        <end position="137"/>
    </location>
</feature>
<feature type="helix" evidence="7">
    <location>
        <begin position="138"/>
        <end position="149"/>
    </location>
</feature>
<feature type="helix" evidence="7">
    <location>
        <begin position="152"/>
        <end position="184"/>
    </location>
</feature>
<feature type="helix" evidence="7">
    <location>
        <begin position="186"/>
        <end position="223"/>
    </location>
</feature>